<evidence type="ECO:0000255" key="1"/>
<evidence type="ECO:0000269" key="2">
    <source>
    </source>
</evidence>
<evidence type="ECO:0000305" key="3"/>
<keyword id="KW-0413">Isomerase</keyword>
<keyword id="KW-0472">Membrane</keyword>
<keyword id="KW-0812">Transmembrane</keyword>
<keyword id="KW-1133">Transmembrane helix</keyword>
<reference key="1">
    <citation type="journal article" date="1997" name="Appl. Environ. Microbiol.">
        <title>Sequencing and functional analysis of styrene catabolism genes from Pseudomonas fluorescens ST.</title>
        <authorList>
            <person name="Beltrametti F."/>
            <person name="Marconi A.M."/>
            <person name="Bestetti G."/>
            <person name="Colombo C."/>
            <person name="Galli E."/>
            <person name="Ruzzi M."/>
            <person name="Zennaro E."/>
        </authorList>
    </citation>
    <scope>NUCLEOTIDE SEQUENCE [GENOMIC DNA]</scope>
    <scope>FUNCTION</scope>
    <scope>CATALYTIC ACTIVITY</scope>
    <scope>PATHWAY</scope>
    <source>
        <strain>ST</strain>
    </source>
</reference>
<reference key="2">
    <citation type="journal article" date="2014" name="PLoS ONE">
        <title>Finding sequences for over 270 orphan enzymes.</title>
        <authorList>
            <person name="Shearer A.G."/>
            <person name="Altman T."/>
            <person name="Rhee C.D."/>
        </authorList>
    </citation>
    <scope>IDENTIFICATION</scope>
</reference>
<dbReference type="EC" id="5.3.99.7"/>
<dbReference type="EMBL" id="Z92524">
    <property type="protein sequence ID" value="CAB06825.1"/>
    <property type="molecule type" value="Genomic_DNA"/>
</dbReference>
<dbReference type="SMR" id="O06836"/>
<dbReference type="BioCyc" id="MetaCyc:MONOMER-16948"/>
<dbReference type="BRENDA" id="5.3.99.7">
    <property type="organism ID" value="5121"/>
</dbReference>
<dbReference type="GO" id="GO:0016020">
    <property type="term" value="C:membrane"/>
    <property type="evidence" value="ECO:0007669"/>
    <property type="project" value="UniProtKB-SubCell"/>
</dbReference>
<dbReference type="GO" id="GO:0018846">
    <property type="term" value="F:styrene-oxide isomerase activity"/>
    <property type="evidence" value="ECO:0000314"/>
    <property type="project" value="UniProtKB"/>
</dbReference>
<dbReference type="GO" id="GO:0042207">
    <property type="term" value="P:styrene catabolic process"/>
    <property type="evidence" value="ECO:0000314"/>
    <property type="project" value="UniProtKB"/>
</dbReference>
<dbReference type="InterPro" id="IPR054803">
    <property type="entry name" value="StyOxIsoStyC"/>
</dbReference>
<dbReference type="NCBIfam" id="NF045734">
    <property type="entry name" value="StyOxIsoStyC"/>
    <property type="match status" value="1"/>
</dbReference>
<feature type="chain" id="PRO_0000430449" description="Styrene-oxide isomerase">
    <location>
        <begin position="1"/>
        <end position="169"/>
    </location>
</feature>
<feature type="transmembrane region" description="Helical" evidence="1">
    <location>
        <begin position="13"/>
        <end position="33"/>
    </location>
</feature>
<feature type="transmembrane region" description="Helical" evidence="1">
    <location>
        <begin position="61"/>
        <end position="81"/>
    </location>
</feature>
<feature type="transmembrane region" description="Helical" evidence="1">
    <location>
        <begin position="85"/>
        <end position="105"/>
    </location>
</feature>
<feature type="transmembrane region" description="Helical" evidence="1">
    <location>
        <begin position="129"/>
        <end position="149"/>
    </location>
</feature>
<accession>O06836</accession>
<organism>
    <name type="scientific">Pseudomonas fluorescens</name>
    <dbReference type="NCBI Taxonomy" id="294"/>
    <lineage>
        <taxon>Bacteria</taxon>
        <taxon>Pseudomonadati</taxon>
        <taxon>Pseudomonadota</taxon>
        <taxon>Gammaproteobacteria</taxon>
        <taxon>Pseudomonadales</taxon>
        <taxon>Pseudomonadaceae</taxon>
        <taxon>Pseudomonas</taxon>
    </lineage>
</organism>
<gene>
    <name type="primary">styC</name>
</gene>
<proteinExistence type="evidence at protein level"/>
<name>STYC_PSEFL</name>
<sequence>MLHAFERKMAGHGILMIFCTLLFGVGLWMHLVGGFEIIPGYILEFHVPGSPEGWARAHSGPALNGMMVIAVAFVLPSLGFADKKPHLLGNIIILDGWANVGFYFFSNFSPNRGLTFGPNHFGPGDIFSFLALAPAYLFGVLAMGALAVIGYQALKSVGSRKAVPHATAE</sequence>
<comment type="function">
    <text evidence="2">Epoxystyrene isomerase that catalyzes the second step in the aerobic styrene degradation pathway by converting epoxystyrene to phenylacetaldehyde.</text>
</comment>
<comment type="catalytic activity">
    <reaction evidence="2">
        <text>styrene oxide = 2-phenylacetaldehyde</text>
        <dbReference type="Rhea" id="RHEA:21604"/>
        <dbReference type="ChEBI" id="CHEBI:16424"/>
        <dbReference type="ChEBI" id="CHEBI:17907"/>
        <dbReference type="EC" id="5.3.99.7"/>
    </reaction>
</comment>
<comment type="pathway">
    <text evidence="2">Aromatic compound metabolism.</text>
</comment>
<comment type="subcellular location">
    <subcellularLocation>
        <location evidence="3">Membrane</location>
        <topology evidence="3">Multi-pass membrane protein</topology>
    </subcellularLocation>
</comment>
<protein>
    <recommendedName>
        <fullName>Styrene-oxide isomerase</fullName>
        <ecNumber>5.3.99.7</ecNumber>
    </recommendedName>
</protein>